<accession>A6X1E3</accession>
<feature type="chain" id="PRO_1000063922" description="Methylenetetrahydrofolate--tRNA-(uracil-5-)-methyltransferase TrmFO">
    <location>
        <begin position="1"/>
        <end position="476"/>
    </location>
</feature>
<feature type="binding site" evidence="1">
    <location>
        <begin position="14"/>
        <end position="19"/>
    </location>
    <ligand>
        <name>FAD</name>
        <dbReference type="ChEBI" id="CHEBI:57692"/>
    </ligand>
</feature>
<sequence length="476" mass="50799">MSNTSDLSPVHVVGGGLAGSEAAWQLAQAGVPVILHEMRPVRGTDAHKTEQLAELVCSNSFRSDDAETNAVGVLHAEMRLAGSLIMACADAHQVPAGGALAVDREGFSQAVTAKLEAHPLITIVREEVTGLPPEEWGTTIVATGPLTAPSLAEAIQAQTGADALAFFDAIAPIIHFDSINMDVCWFQSRYDKVGPGGTGKDYINCPMDKEQYEAFVAALVEGDKTDFKEWEGTPYFDGCLPIEVMAERGPETLRHGPMKPMGLTNAHNPTVKAYAVVQLRQDNALGTLYNMVGFQTKLKYGSQTGIFKMIPGLENAEFARLGGLHRNTYLNSPVLLDGTLRLKSRETLRFAGQVTGCEGYVESSAIGLLAGRFTAAEKLGQTLTPPPGTTAFGALLGHITGGHIVADDEPGKRSFQPMNVNFGLFPPVDVPKPEGKRLRGKEKTVAKKRALSARALADCRQWLGLLGLGSGLEPAE</sequence>
<reference key="1">
    <citation type="journal article" date="2011" name="J. Bacteriol.">
        <title>Genome of Ochrobactrum anthropi ATCC 49188 T, a versatile opportunistic pathogen and symbiont of several eukaryotic hosts.</title>
        <authorList>
            <person name="Chain P.S."/>
            <person name="Lang D.M."/>
            <person name="Comerci D.J."/>
            <person name="Malfatti S.A."/>
            <person name="Vergez L.M."/>
            <person name="Shin M."/>
            <person name="Ugalde R.A."/>
            <person name="Garcia E."/>
            <person name="Tolmasky M.E."/>
        </authorList>
    </citation>
    <scope>NUCLEOTIDE SEQUENCE [LARGE SCALE GENOMIC DNA]</scope>
    <source>
        <strain>ATCC 49188 / DSM 6882 / CCUG 24695 / JCM 21032 / LMG 3331 / NBRC 15819 / NCTC 12168 / Alc 37</strain>
    </source>
</reference>
<evidence type="ECO:0000255" key="1">
    <source>
        <dbReference type="HAMAP-Rule" id="MF_01037"/>
    </source>
</evidence>
<dbReference type="EC" id="2.1.1.74" evidence="1"/>
<dbReference type="EMBL" id="CP000758">
    <property type="protein sequence ID" value="ABS15047.1"/>
    <property type="molecule type" value="Genomic_DNA"/>
</dbReference>
<dbReference type="RefSeq" id="WP_012092203.1">
    <property type="nucleotide sequence ID" value="NC_009667.1"/>
</dbReference>
<dbReference type="SMR" id="A6X1E3"/>
<dbReference type="STRING" id="439375.Oant_2333"/>
<dbReference type="KEGG" id="oan:Oant_2333"/>
<dbReference type="PATRIC" id="fig|439375.7.peg.2463"/>
<dbReference type="eggNOG" id="COG1206">
    <property type="taxonomic scope" value="Bacteria"/>
</dbReference>
<dbReference type="HOGENOM" id="CLU_033057_1_0_5"/>
<dbReference type="PhylomeDB" id="A6X1E3"/>
<dbReference type="Proteomes" id="UP000002301">
    <property type="component" value="Chromosome 1"/>
</dbReference>
<dbReference type="GO" id="GO:0005829">
    <property type="term" value="C:cytosol"/>
    <property type="evidence" value="ECO:0007669"/>
    <property type="project" value="TreeGrafter"/>
</dbReference>
<dbReference type="GO" id="GO:0050660">
    <property type="term" value="F:flavin adenine dinucleotide binding"/>
    <property type="evidence" value="ECO:0007669"/>
    <property type="project" value="UniProtKB-UniRule"/>
</dbReference>
<dbReference type="GO" id="GO:0047151">
    <property type="term" value="F:tRNA (uracil(54)-C5)-methyltransferase activity, 5,10-methylenetetrahydrofolate-dependent"/>
    <property type="evidence" value="ECO:0007669"/>
    <property type="project" value="UniProtKB-UniRule"/>
</dbReference>
<dbReference type="GO" id="GO:0030488">
    <property type="term" value="P:tRNA methylation"/>
    <property type="evidence" value="ECO:0007669"/>
    <property type="project" value="TreeGrafter"/>
</dbReference>
<dbReference type="GO" id="GO:0002098">
    <property type="term" value="P:tRNA wobble uridine modification"/>
    <property type="evidence" value="ECO:0007669"/>
    <property type="project" value="TreeGrafter"/>
</dbReference>
<dbReference type="Gene3D" id="3.50.50.60">
    <property type="entry name" value="FAD/NAD(P)-binding domain"/>
    <property type="match status" value="2"/>
</dbReference>
<dbReference type="HAMAP" id="MF_01037">
    <property type="entry name" value="TrmFO"/>
    <property type="match status" value="1"/>
</dbReference>
<dbReference type="InterPro" id="IPR036188">
    <property type="entry name" value="FAD/NAD-bd_sf"/>
</dbReference>
<dbReference type="InterPro" id="IPR002218">
    <property type="entry name" value="MnmG-rel"/>
</dbReference>
<dbReference type="InterPro" id="IPR020595">
    <property type="entry name" value="MnmG-rel_CS"/>
</dbReference>
<dbReference type="InterPro" id="IPR040131">
    <property type="entry name" value="MnmG_N"/>
</dbReference>
<dbReference type="InterPro" id="IPR004417">
    <property type="entry name" value="TrmFO"/>
</dbReference>
<dbReference type="NCBIfam" id="TIGR00137">
    <property type="entry name" value="gid_trmFO"/>
    <property type="match status" value="1"/>
</dbReference>
<dbReference type="NCBIfam" id="NF003739">
    <property type="entry name" value="PRK05335.1"/>
    <property type="match status" value="1"/>
</dbReference>
<dbReference type="PANTHER" id="PTHR11806">
    <property type="entry name" value="GLUCOSE INHIBITED DIVISION PROTEIN A"/>
    <property type="match status" value="1"/>
</dbReference>
<dbReference type="PANTHER" id="PTHR11806:SF2">
    <property type="entry name" value="METHYLENETETRAHYDROFOLATE--TRNA-(URACIL-5-)-METHYLTRANSFERASE TRMFO"/>
    <property type="match status" value="1"/>
</dbReference>
<dbReference type="Pfam" id="PF01134">
    <property type="entry name" value="GIDA"/>
    <property type="match status" value="1"/>
</dbReference>
<dbReference type="SUPFAM" id="SSF51905">
    <property type="entry name" value="FAD/NAD(P)-binding domain"/>
    <property type="match status" value="1"/>
</dbReference>
<dbReference type="PROSITE" id="PS01281">
    <property type="entry name" value="GIDA_2"/>
    <property type="match status" value="1"/>
</dbReference>
<gene>
    <name evidence="1" type="primary">trmFO</name>
    <name type="synonym">gid</name>
    <name type="ordered locus">Oant_2333</name>
</gene>
<proteinExistence type="inferred from homology"/>
<protein>
    <recommendedName>
        <fullName evidence="1">Methylenetetrahydrofolate--tRNA-(uracil-5-)-methyltransferase TrmFO</fullName>
        <ecNumber evidence="1">2.1.1.74</ecNumber>
    </recommendedName>
    <alternativeName>
        <fullName evidence="1">Folate-dependent tRNA (uracil-5-)-methyltransferase</fullName>
    </alternativeName>
    <alternativeName>
        <fullName evidence="1">Folate-dependent tRNA(M-5-U54)-methyltransferase</fullName>
    </alternativeName>
</protein>
<name>TRMFO_BRUA4</name>
<keyword id="KW-0963">Cytoplasm</keyword>
<keyword id="KW-0274">FAD</keyword>
<keyword id="KW-0285">Flavoprotein</keyword>
<keyword id="KW-0489">Methyltransferase</keyword>
<keyword id="KW-0520">NAD</keyword>
<keyword id="KW-0521">NADP</keyword>
<keyword id="KW-1185">Reference proteome</keyword>
<keyword id="KW-0808">Transferase</keyword>
<keyword id="KW-0819">tRNA processing</keyword>
<comment type="function">
    <text evidence="1">Catalyzes the folate-dependent formation of 5-methyl-uridine at position 54 (M-5-U54) in all tRNAs.</text>
</comment>
<comment type="catalytic activity">
    <reaction evidence="1">
        <text>uridine(54) in tRNA + (6R)-5,10-methylene-5,6,7,8-tetrahydrofolate + NADH + H(+) = 5-methyluridine(54) in tRNA + (6S)-5,6,7,8-tetrahydrofolate + NAD(+)</text>
        <dbReference type="Rhea" id="RHEA:16873"/>
        <dbReference type="Rhea" id="RHEA-COMP:10167"/>
        <dbReference type="Rhea" id="RHEA-COMP:10193"/>
        <dbReference type="ChEBI" id="CHEBI:15378"/>
        <dbReference type="ChEBI" id="CHEBI:15636"/>
        <dbReference type="ChEBI" id="CHEBI:57453"/>
        <dbReference type="ChEBI" id="CHEBI:57540"/>
        <dbReference type="ChEBI" id="CHEBI:57945"/>
        <dbReference type="ChEBI" id="CHEBI:65315"/>
        <dbReference type="ChEBI" id="CHEBI:74447"/>
        <dbReference type="EC" id="2.1.1.74"/>
    </reaction>
</comment>
<comment type="catalytic activity">
    <reaction evidence="1">
        <text>uridine(54) in tRNA + (6R)-5,10-methylene-5,6,7,8-tetrahydrofolate + NADPH + H(+) = 5-methyluridine(54) in tRNA + (6S)-5,6,7,8-tetrahydrofolate + NADP(+)</text>
        <dbReference type="Rhea" id="RHEA:62372"/>
        <dbReference type="Rhea" id="RHEA-COMP:10167"/>
        <dbReference type="Rhea" id="RHEA-COMP:10193"/>
        <dbReference type="ChEBI" id="CHEBI:15378"/>
        <dbReference type="ChEBI" id="CHEBI:15636"/>
        <dbReference type="ChEBI" id="CHEBI:57453"/>
        <dbReference type="ChEBI" id="CHEBI:57783"/>
        <dbReference type="ChEBI" id="CHEBI:58349"/>
        <dbReference type="ChEBI" id="CHEBI:65315"/>
        <dbReference type="ChEBI" id="CHEBI:74447"/>
        <dbReference type="EC" id="2.1.1.74"/>
    </reaction>
</comment>
<comment type="cofactor">
    <cofactor evidence="1">
        <name>FAD</name>
        <dbReference type="ChEBI" id="CHEBI:57692"/>
    </cofactor>
</comment>
<comment type="subcellular location">
    <subcellularLocation>
        <location evidence="1">Cytoplasm</location>
    </subcellularLocation>
</comment>
<comment type="similarity">
    <text evidence="1">Belongs to the MnmG family. TrmFO subfamily.</text>
</comment>
<organism>
    <name type="scientific">Brucella anthropi (strain ATCC 49188 / DSM 6882 / CCUG 24695 / JCM 21032 / LMG 3331 / NBRC 15819 / NCTC 12168 / Alc 37)</name>
    <name type="common">Ochrobactrum anthropi</name>
    <dbReference type="NCBI Taxonomy" id="439375"/>
    <lineage>
        <taxon>Bacteria</taxon>
        <taxon>Pseudomonadati</taxon>
        <taxon>Pseudomonadota</taxon>
        <taxon>Alphaproteobacteria</taxon>
        <taxon>Hyphomicrobiales</taxon>
        <taxon>Brucellaceae</taxon>
        <taxon>Brucella/Ochrobactrum group</taxon>
        <taxon>Brucella</taxon>
    </lineage>
</organism>